<keyword id="KW-0240">DNA-directed RNA polymerase</keyword>
<keyword id="KW-0460">Magnesium</keyword>
<keyword id="KW-0479">Metal-binding</keyword>
<keyword id="KW-0548">Nucleotidyltransferase</keyword>
<keyword id="KW-0804">Transcription</keyword>
<keyword id="KW-0808">Transferase</keyword>
<keyword id="KW-0862">Zinc</keyword>
<name>RPOC_LACJO</name>
<reference key="1">
    <citation type="journal article" date="2004" name="Proc. Natl. Acad. Sci. U.S.A.">
        <title>The genome sequence of the probiotic intestinal bacterium Lactobacillus johnsonii NCC 533.</title>
        <authorList>
            <person name="Pridmore R.D."/>
            <person name="Berger B."/>
            <person name="Desiere F."/>
            <person name="Vilanova D."/>
            <person name="Barretto C."/>
            <person name="Pittet A.-C."/>
            <person name="Zwahlen M.-C."/>
            <person name="Rouvet M."/>
            <person name="Altermann E."/>
            <person name="Barrangou R."/>
            <person name="Mollet B."/>
            <person name="Mercenier A."/>
            <person name="Klaenhammer T."/>
            <person name="Arigoni F."/>
            <person name="Schell M.A."/>
        </authorList>
    </citation>
    <scope>NUCLEOTIDE SEQUENCE [LARGE SCALE GENOMIC DNA]</scope>
    <source>
        <strain>CNCM I-1225 / La1 / NCC 533</strain>
    </source>
</reference>
<proteinExistence type="inferred from homology"/>
<accession>Q74L94</accession>
<gene>
    <name evidence="1" type="primary">rpoC</name>
    <name type="ordered locus">LJ_0333</name>
</gene>
<feature type="chain" id="PRO_0000225543" description="DNA-directed RNA polymerase subunit beta'">
    <location>
        <begin position="1"/>
        <end position="1224"/>
    </location>
</feature>
<feature type="binding site" evidence="1">
    <location>
        <position position="60"/>
    </location>
    <ligand>
        <name>Zn(2+)</name>
        <dbReference type="ChEBI" id="CHEBI:29105"/>
        <label>1</label>
    </ligand>
</feature>
<feature type="binding site" evidence="1">
    <location>
        <position position="62"/>
    </location>
    <ligand>
        <name>Zn(2+)</name>
        <dbReference type="ChEBI" id="CHEBI:29105"/>
        <label>1</label>
    </ligand>
</feature>
<feature type="binding site" evidence="1">
    <location>
        <position position="75"/>
    </location>
    <ligand>
        <name>Zn(2+)</name>
        <dbReference type="ChEBI" id="CHEBI:29105"/>
        <label>1</label>
    </ligand>
</feature>
<feature type="binding site" evidence="1">
    <location>
        <position position="78"/>
    </location>
    <ligand>
        <name>Zn(2+)</name>
        <dbReference type="ChEBI" id="CHEBI:29105"/>
        <label>1</label>
    </ligand>
</feature>
<feature type="binding site" evidence="1">
    <location>
        <position position="449"/>
    </location>
    <ligand>
        <name>Mg(2+)</name>
        <dbReference type="ChEBI" id="CHEBI:18420"/>
    </ligand>
</feature>
<feature type="binding site" evidence="1">
    <location>
        <position position="451"/>
    </location>
    <ligand>
        <name>Mg(2+)</name>
        <dbReference type="ChEBI" id="CHEBI:18420"/>
    </ligand>
</feature>
<feature type="binding site" evidence="1">
    <location>
        <position position="453"/>
    </location>
    <ligand>
        <name>Mg(2+)</name>
        <dbReference type="ChEBI" id="CHEBI:18420"/>
    </ligand>
</feature>
<feature type="binding site" evidence="1">
    <location>
        <position position="819"/>
    </location>
    <ligand>
        <name>Zn(2+)</name>
        <dbReference type="ChEBI" id="CHEBI:29105"/>
        <label>2</label>
    </ligand>
</feature>
<feature type="binding site" evidence="1">
    <location>
        <position position="893"/>
    </location>
    <ligand>
        <name>Zn(2+)</name>
        <dbReference type="ChEBI" id="CHEBI:29105"/>
        <label>2</label>
    </ligand>
</feature>
<feature type="binding site" evidence="1">
    <location>
        <position position="900"/>
    </location>
    <ligand>
        <name>Zn(2+)</name>
        <dbReference type="ChEBI" id="CHEBI:29105"/>
        <label>2</label>
    </ligand>
</feature>
<feature type="binding site" evidence="1">
    <location>
        <position position="903"/>
    </location>
    <ligand>
        <name>Zn(2+)</name>
        <dbReference type="ChEBI" id="CHEBI:29105"/>
        <label>2</label>
    </ligand>
</feature>
<sequence length="1224" mass="136440">MIDVNKFESMQIGLASPNKIRSWSYGEVKKPETINYRTLKPEKDGLFDERIFGPTKDWSCACGKYKGIRYRGIVCDRCGVEVTSAKVRRERMGHIELAAPVSHIWYFKGIPSRMGLVLDISPRALEEVIYFAAYIVIDAGDTDLEDKQLLTEAEYREKKAKFGDRFEAKMGAEAVKELLEQVDIDKEVHELKEELKTATGQKRTRAIRRLDILDAFKNSGNKPSWMVMDCIPVIPPDLRPMVQLDGGRFATSDLNDLYRRVINRNNRLKRLLDLNAPRIIVQNEKRMLQEAVDALIDNGRRGRPVVGPGNRPLKSLSHMLKGKQGRLRQNLLGKRVDYSGRSVIDVSPELKFYQCGVPRPMALELFKPFVMHELVKRGLASNIKNAKRKIDREDDDIWDILEDVIKERPVLLNRAPTLHRLGIQAFEPVLVPGKSIRLHPLACEAYNADFDGDQMAIHVPLSDEAVAESRLLMLAAHHILAPKDGKPIVTPSQDIVLGNYWLTQAERGREGEGMIFDSPAEAAIAYANGDIHYHTRIGLAADSMPEKPWPKGYEHGIFVTTYGKLVFNQIFPKDFYYINDPTQENLTHPVDERYFLQPGEDIHEKLDNMKLGQAFKKGFLSDSIAQIYKDYKVQRTSDFLDDLKELGYTVCTTSGLTIGVEDIPTISDKDDIVAEARKKVDVVSKQYRRGLITDEERHDRVISIWNNCKDIVQNEIAQIIHAPRNPITIMADSGARGNISNFTQLAGMRGLMAAPNGGMMEIPVTSNFREGLSVLEMFMSTHGARKGMTDTALKTANSGYLTRRLVDVAQDVIIREEDCGTDRGLTVHAITEGDEMIEPLFDRLVGRYTSKSVYDPETHEVICPADVLMDEDMAHKIVDAGVTEVTIRSVFTCNTQHGVCKKCYGMNLATGDDVEVGEAVGTVAAQSIGEPGTQLTMRNFHNGGVAGAADITQGLPRVQELFEARNPKGRATISEVTGEVTSIEEDPAEHTRQITVKGQTDTRTYDVPYTASVAVAEGDHVVRGDKLTLGSIDPKELIRVRDALTTEKYILSEIQKAYRMQGVEIADKHVEVMARQMLQKVRILDPGETDILPGELMDIGEFKARNREVIISGGIPATAQSVILGITKAALETNSFLSAASFQETTRVLTDASIRGKNDPLLGLKENVIIGKIIPAGTGMPVYREMEPKVDVPEDEKKKSVYSIADIEKKLAAADAEKDNGSAD</sequence>
<comment type="function">
    <text evidence="1">DNA-dependent RNA polymerase catalyzes the transcription of DNA into RNA using the four ribonucleoside triphosphates as substrates.</text>
</comment>
<comment type="catalytic activity">
    <reaction evidence="1">
        <text>RNA(n) + a ribonucleoside 5'-triphosphate = RNA(n+1) + diphosphate</text>
        <dbReference type="Rhea" id="RHEA:21248"/>
        <dbReference type="Rhea" id="RHEA-COMP:14527"/>
        <dbReference type="Rhea" id="RHEA-COMP:17342"/>
        <dbReference type="ChEBI" id="CHEBI:33019"/>
        <dbReference type="ChEBI" id="CHEBI:61557"/>
        <dbReference type="ChEBI" id="CHEBI:140395"/>
        <dbReference type="EC" id="2.7.7.6"/>
    </reaction>
</comment>
<comment type="cofactor">
    <cofactor evidence="1">
        <name>Mg(2+)</name>
        <dbReference type="ChEBI" id="CHEBI:18420"/>
    </cofactor>
    <text evidence="1">Binds 1 Mg(2+) ion per subunit.</text>
</comment>
<comment type="cofactor">
    <cofactor evidence="1">
        <name>Zn(2+)</name>
        <dbReference type="ChEBI" id="CHEBI:29105"/>
    </cofactor>
    <text evidence="1">Binds 2 Zn(2+) ions per subunit.</text>
</comment>
<comment type="subunit">
    <text evidence="1">The RNAP catalytic core consists of 2 alpha, 1 beta, 1 beta' and 1 omega subunit. When a sigma factor is associated with the core the holoenzyme is formed, which can initiate transcription.</text>
</comment>
<comment type="similarity">
    <text evidence="1">Belongs to the RNA polymerase beta' chain family.</text>
</comment>
<evidence type="ECO:0000255" key="1">
    <source>
        <dbReference type="HAMAP-Rule" id="MF_01322"/>
    </source>
</evidence>
<dbReference type="EC" id="2.7.7.6" evidence="1"/>
<dbReference type="EMBL" id="AE017198">
    <property type="protein sequence ID" value="AAS08319.1"/>
    <property type="molecule type" value="Genomic_DNA"/>
</dbReference>
<dbReference type="RefSeq" id="WP_011161518.1">
    <property type="nucleotide sequence ID" value="NC_005362.1"/>
</dbReference>
<dbReference type="SMR" id="Q74L94"/>
<dbReference type="KEGG" id="ljo:LJ_0333"/>
<dbReference type="PATRIC" id="fig|257314.6.peg.351"/>
<dbReference type="eggNOG" id="COG0086">
    <property type="taxonomic scope" value="Bacteria"/>
</dbReference>
<dbReference type="HOGENOM" id="CLU_000524_3_1_9"/>
<dbReference type="Proteomes" id="UP000000581">
    <property type="component" value="Chromosome"/>
</dbReference>
<dbReference type="GO" id="GO:0000428">
    <property type="term" value="C:DNA-directed RNA polymerase complex"/>
    <property type="evidence" value="ECO:0007669"/>
    <property type="project" value="UniProtKB-KW"/>
</dbReference>
<dbReference type="GO" id="GO:0003677">
    <property type="term" value="F:DNA binding"/>
    <property type="evidence" value="ECO:0007669"/>
    <property type="project" value="UniProtKB-UniRule"/>
</dbReference>
<dbReference type="GO" id="GO:0003899">
    <property type="term" value="F:DNA-directed RNA polymerase activity"/>
    <property type="evidence" value="ECO:0007669"/>
    <property type="project" value="UniProtKB-UniRule"/>
</dbReference>
<dbReference type="GO" id="GO:0000287">
    <property type="term" value="F:magnesium ion binding"/>
    <property type="evidence" value="ECO:0007669"/>
    <property type="project" value="UniProtKB-UniRule"/>
</dbReference>
<dbReference type="GO" id="GO:0008270">
    <property type="term" value="F:zinc ion binding"/>
    <property type="evidence" value="ECO:0007669"/>
    <property type="project" value="UniProtKB-UniRule"/>
</dbReference>
<dbReference type="GO" id="GO:0006351">
    <property type="term" value="P:DNA-templated transcription"/>
    <property type="evidence" value="ECO:0007669"/>
    <property type="project" value="UniProtKB-UniRule"/>
</dbReference>
<dbReference type="CDD" id="cd02655">
    <property type="entry name" value="RNAP_beta'_C"/>
    <property type="match status" value="1"/>
</dbReference>
<dbReference type="CDD" id="cd01609">
    <property type="entry name" value="RNAP_beta'_N"/>
    <property type="match status" value="1"/>
</dbReference>
<dbReference type="FunFam" id="4.10.860.120:FF:000001">
    <property type="entry name" value="DNA-directed RNA polymerase subunit beta"/>
    <property type="match status" value="1"/>
</dbReference>
<dbReference type="Gene3D" id="1.10.132.30">
    <property type="match status" value="1"/>
</dbReference>
<dbReference type="Gene3D" id="1.10.150.390">
    <property type="match status" value="1"/>
</dbReference>
<dbReference type="Gene3D" id="1.10.1790.20">
    <property type="match status" value="1"/>
</dbReference>
<dbReference type="Gene3D" id="1.10.40.90">
    <property type="match status" value="1"/>
</dbReference>
<dbReference type="Gene3D" id="2.40.40.20">
    <property type="match status" value="1"/>
</dbReference>
<dbReference type="Gene3D" id="2.40.50.100">
    <property type="match status" value="1"/>
</dbReference>
<dbReference type="Gene3D" id="4.10.860.120">
    <property type="entry name" value="RNA polymerase II, clamp domain"/>
    <property type="match status" value="1"/>
</dbReference>
<dbReference type="Gene3D" id="1.10.274.100">
    <property type="entry name" value="RNA polymerase Rpb1, domain 3"/>
    <property type="match status" value="2"/>
</dbReference>
<dbReference type="HAMAP" id="MF_01322">
    <property type="entry name" value="RNApol_bact_RpoC"/>
    <property type="match status" value="1"/>
</dbReference>
<dbReference type="InterPro" id="IPR045867">
    <property type="entry name" value="DNA-dir_RpoC_beta_prime"/>
</dbReference>
<dbReference type="InterPro" id="IPR012754">
    <property type="entry name" value="DNA-dir_RpoC_beta_prime_bact"/>
</dbReference>
<dbReference type="InterPro" id="IPR000722">
    <property type="entry name" value="RNA_pol_asu"/>
</dbReference>
<dbReference type="InterPro" id="IPR006592">
    <property type="entry name" value="RNA_pol_N"/>
</dbReference>
<dbReference type="InterPro" id="IPR007080">
    <property type="entry name" value="RNA_pol_Rpb1_1"/>
</dbReference>
<dbReference type="InterPro" id="IPR007066">
    <property type="entry name" value="RNA_pol_Rpb1_3"/>
</dbReference>
<dbReference type="InterPro" id="IPR042102">
    <property type="entry name" value="RNA_pol_Rpb1_3_sf"/>
</dbReference>
<dbReference type="InterPro" id="IPR007083">
    <property type="entry name" value="RNA_pol_Rpb1_4"/>
</dbReference>
<dbReference type="InterPro" id="IPR007081">
    <property type="entry name" value="RNA_pol_Rpb1_5"/>
</dbReference>
<dbReference type="InterPro" id="IPR044893">
    <property type="entry name" value="RNA_pol_Rpb1_clamp_domain"/>
</dbReference>
<dbReference type="InterPro" id="IPR038120">
    <property type="entry name" value="Rpb1_funnel_sf"/>
</dbReference>
<dbReference type="NCBIfam" id="TIGR02386">
    <property type="entry name" value="rpoC_TIGR"/>
    <property type="match status" value="1"/>
</dbReference>
<dbReference type="PANTHER" id="PTHR19376">
    <property type="entry name" value="DNA-DIRECTED RNA POLYMERASE"/>
    <property type="match status" value="1"/>
</dbReference>
<dbReference type="PANTHER" id="PTHR19376:SF54">
    <property type="entry name" value="DNA-DIRECTED RNA POLYMERASE SUBUNIT BETA"/>
    <property type="match status" value="1"/>
</dbReference>
<dbReference type="Pfam" id="PF04997">
    <property type="entry name" value="RNA_pol_Rpb1_1"/>
    <property type="match status" value="1"/>
</dbReference>
<dbReference type="Pfam" id="PF00623">
    <property type="entry name" value="RNA_pol_Rpb1_2"/>
    <property type="match status" value="1"/>
</dbReference>
<dbReference type="Pfam" id="PF04983">
    <property type="entry name" value="RNA_pol_Rpb1_3"/>
    <property type="match status" value="1"/>
</dbReference>
<dbReference type="Pfam" id="PF05000">
    <property type="entry name" value="RNA_pol_Rpb1_4"/>
    <property type="match status" value="1"/>
</dbReference>
<dbReference type="Pfam" id="PF04998">
    <property type="entry name" value="RNA_pol_Rpb1_5"/>
    <property type="match status" value="1"/>
</dbReference>
<dbReference type="SMART" id="SM00663">
    <property type="entry name" value="RPOLA_N"/>
    <property type="match status" value="1"/>
</dbReference>
<dbReference type="SUPFAM" id="SSF64484">
    <property type="entry name" value="beta and beta-prime subunits of DNA dependent RNA-polymerase"/>
    <property type="match status" value="1"/>
</dbReference>
<organism>
    <name type="scientific">Lactobacillus johnsonii (strain CNCM I-12250 / La1 / NCC 533)</name>
    <dbReference type="NCBI Taxonomy" id="257314"/>
    <lineage>
        <taxon>Bacteria</taxon>
        <taxon>Bacillati</taxon>
        <taxon>Bacillota</taxon>
        <taxon>Bacilli</taxon>
        <taxon>Lactobacillales</taxon>
        <taxon>Lactobacillaceae</taxon>
        <taxon>Lactobacillus</taxon>
    </lineage>
</organism>
<protein>
    <recommendedName>
        <fullName evidence="1">DNA-directed RNA polymerase subunit beta'</fullName>
        <shortName evidence="1">RNAP subunit beta'</shortName>
        <ecNumber evidence="1">2.7.7.6</ecNumber>
    </recommendedName>
    <alternativeName>
        <fullName evidence="1">RNA polymerase subunit beta'</fullName>
    </alternativeName>
    <alternativeName>
        <fullName evidence="1">Transcriptase subunit beta'</fullName>
    </alternativeName>
</protein>